<name>OPGB_ECO5E</name>
<gene>
    <name evidence="1" type="primary">mdoB</name>
    <name evidence="1" type="synonym">opgB</name>
    <name type="ordered locus">ECH74115_5872</name>
</gene>
<reference key="1">
    <citation type="journal article" date="2011" name="Proc. Natl. Acad. Sci. U.S.A.">
        <title>Genomic anatomy of Escherichia coli O157:H7 outbreaks.</title>
        <authorList>
            <person name="Eppinger M."/>
            <person name="Mammel M.K."/>
            <person name="Leclerc J.E."/>
            <person name="Ravel J."/>
            <person name="Cebula T.A."/>
        </authorList>
    </citation>
    <scope>NUCLEOTIDE SEQUENCE [LARGE SCALE GENOMIC DNA]</scope>
    <source>
        <strain>EC4115 / EHEC</strain>
    </source>
</reference>
<protein>
    <recommendedName>
        <fullName evidence="1">Phosphoglycerol transferase I</fullName>
        <ecNumber evidence="1">2.7.8.20</ecNumber>
    </recommendedName>
    <alternativeName>
        <fullName evidence="1">Phosphatidylglycerol--membrane-oligosaccharide glycerophosphotransferase</fullName>
    </alternativeName>
</protein>
<comment type="function">
    <text evidence="1">Transfers a phosphoglycerol residue from phosphatidylglycerol to the membrane-bound nascent glucan backbones.</text>
</comment>
<comment type="catalytic activity">
    <reaction evidence="1">
        <text>a phosphatidylglycerol + a membrane-derived-oligosaccharide D-glucose = a 1,2-diacyl-sn-glycerol + a membrane-derived-oligosaccharide 6-(glycerophospho)-D-glucose.</text>
        <dbReference type="EC" id="2.7.8.20"/>
    </reaction>
</comment>
<comment type="pathway">
    <text evidence="1">Glycan metabolism; osmoregulated periplasmic glucan (OPG) biosynthesis.</text>
</comment>
<comment type="subcellular location">
    <subcellularLocation>
        <location evidence="1">Cell inner membrane</location>
        <topology evidence="1">Multi-pass membrane protein</topology>
    </subcellularLocation>
</comment>
<comment type="similarity">
    <text evidence="1">Belongs to the OpgB family.</text>
</comment>
<evidence type="ECO:0000255" key="1">
    <source>
        <dbReference type="HAMAP-Rule" id="MF_01070"/>
    </source>
</evidence>
<accession>B5Z4P2</accession>
<keyword id="KW-0997">Cell inner membrane</keyword>
<keyword id="KW-1003">Cell membrane</keyword>
<keyword id="KW-0472">Membrane</keyword>
<keyword id="KW-0808">Transferase</keyword>
<keyword id="KW-0812">Transmembrane</keyword>
<keyword id="KW-1133">Transmembrane helix</keyword>
<dbReference type="EC" id="2.7.8.20" evidence="1"/>
<dbReference type="EMBL" id="CP001164">
    <property type="protein sequence ID" value="ACI37466.1"/>
    <property type="molecule type" value="Genomic_DNA"/>
</dbReference>
<dbReference type="RefSeq" id="WP_001292676.1">
    <property type="nucleotide sequence ID" value="NC_011353.1"/>
</dbReference>
<dbReference type="SMR" id="B5Z4P2"/>
<dbReference type="KEGG" id="ecf:ECH74115_5872"/>
<dbReference type="HOGENOM" id="CLU_023986_1_0_6"/>
<dbReference type="UniPathway" id="UPA00637"/>
<dbReference type="GO" id="GO:0005886">
    <property type="term" value="C:plasma membrane"/>
    <property type="evidence" value="ECO:0007669"/>
    <property type="project" value="UniProtKB-SubCell"/>
</dbReference>
<dbReference type="GO" id="GO:0008960">
    <property type="term" value="F:phosphatidylglycerol-membrane-oligosaccharide glycerophosphotransferase activity"/>
    <property type="evidence" value="ECO:0007669"/>
    <property type="project" value="UniProtKB-UniRule"/>
</dbReference>
<dbReference type="GO" id="GO:0009250">
    <property type="term" value="P:glucan biosynthetic process"/>
    <property type="evidence" value="ECO:0007669"/>
    <property type="project" value="UniProtKB-UniRule"/>
</dbReference>
<dbReference type="CDD" id="cd16015">
    <property type="entry name" value="LTA_synthase"/>
    <property type="match status" value="1"/>
</dbReference>
<dbReference type="FunFam" id="3.40.720.10:FF:000009">
    <property type="entry name" value="Phosphoglycerol transferase I"/>
    <property type="match status" value="1"/>
</dbReference>
<dbReference type="Gene3D" id="3.40.720.10">
    <property type="entry name" value="Alkaline Phosphatase, subunit A"/>
    <property type="match status" value="1"/>
</dbReference>
<dbReference type="HAMAP" id="MF_01070">
    <property type="entry name" value="MdoB_OpgB"/>
    <property type="match status" value="1"/>
</dbReference>
<dbReference type="InterPro" id="IPR017850">
    <property type="entry name" value="Alkaline_phosphatase_core_sf"/>
</dbReference>
<dbReference type="InterPro" id="IPR054288">
    <property type="entry name" value="DUF7024"/>
</dbReference>
<dbReference type="InterPro" id="IPR020881">
    <property type="entry name" value="OpgB"/>
</dbReference>
<dbReference type="InterPro" id="IPR050448">
    <property type="entry name" value="OpgB/LTA_synthase_biosynth"/>
</dbReference>
<dbReference type="InterPro" id="IPR000917">
    <property type="entry name" value="Sulfatase_N"/>
</dbReference>
<dbReference type="NCBIfam" id="NF003000">
    <property type="entry name" value="PRK03776.1"/>
    <property type="match status" value="1"/>
</dbReference>
<dbReference type="PANTHER" id="PTHR47371">
    <property type="entry name" value="LIPOTEICHOIC ACID SYNTHASE"/>
    <property type="match status" value="1"/>
</dbReference>
<dbReference type="PANTHER" id="PTHR47371:SF3">
    <property type="entry name" value="PHOSPHOGLYCEROL TRANSFERASE I"/>
    <property type="match status" value="1"/>
</dbReference>
<dbReference type="Pfam" id="PF22895">
    <property type="entry name" value="DUF7024"/>
    <property type="match status" value="1"/>
</dbReference>
<dbReference type="Pfam" id="PF00884">
    <property type="entry name" value="Sulfatase"/>
    <property type="match status" value="1"/>
</dbReference>
<dbReference type="SUPFAM" id="SSF53649">
    <property type="entry name" value="Alkaline phosphatase-like"/>
    <property type="match status" value="1"/>
</dbReference>
<organism>
    <name type="scientific">Escherichia coli O157:H7 (strain EC4115 / EHEC)</name>
    <dbReference type="NCBI Taxonomy" id="444450"/>
    <lineage>
        <taxon>Bacteria</taxon>
        <taxon>Pseudomonadati</taxon>
        <taxon>Pseudomonadota</taxon>
        <taxon>Gammaproteobacteria</taxon>
        <taxon>Enterobacterales</taxon>
        <taxon>Enterobacteriaceae</taxon>
        <taxon>Escherichia</taxon>
    </lineage>
</organism>
<feature type="chain" id="PRO_1000136621" description="Phosphoglycerol transferase I">
    <location>
        <begin position="1"/>
        <end position="763"/>
    </location>
</feature>
<feature type="transmembrane region" description="Helical" evidence="1">
    <location>
        <begin position="1"/>
        <end position="21"/>
    </location>
</feature>
<feature type="transmembrane region" description="Helical" evidence="1">
    <location>
        <begin position="26"/>
        <end position="46"/>
    </location>
</feature>
<feature type="transmembrane region" description="Helical" evidence="1">
    <location>
        <begin position="77"/>
        <end position="97"/>
    </location>
</feature>
<feature type="transmembrane region" description="Helical" evidence="1">
    <location>
        <begin position="108"/>
        <end position="128"/>
    </location>
</feature>
<proteinExistence type="inferred from homology"/>
<sequence>MSELLSFALFLASVLIYAWKAGRNTWWFAATLTVLGLFVVLNITLFASDYFTGDGINDAVLYTLTNSLTGAGVSKYILPGIGIVLGLTAVFGALGWILRRRRHHPHHFGYSLLALLLALGSVDASPAFRQITELVKSQSRDGDPDFAAYYKEPSKTIPDPKLNLVYIYGESLERTYFDNEAFPDLTPELGALKNEGLDFSHTQQLPGTDYTIAGMVASQCGIPLFAPFEGNASASVSSFFPQNICLGDILKNSGYQNYFVQGANLRFAGKDVFLKSHGFDHLYGSEELKSVVADPHYRNDWGFYDDTVLDEAWKKFEELSRSGQRFSLFTLTVDTHHPDGFISRTCNRKKYDFDGKPNQSFSAVSCSQENIATFINKIKASPWFKDTVIVVSSDHLAMNNTAWKYLNKQDRNNLFFVIRGDKPQQETLAVKRNTMDNGATVLDILGGDNYLGLGRSSLSGQSMSEIFLNIKEKTLAWKPDIIRLWKFPKEMKEFTIDQQKNMIAFSGSHFRLPLLLRVSDKRVEPLPESEYSAPLRFQLADFAPRDNFVWVDRCYKMAQLWAPELALSTDWCVSQGQLGGQQIVQHVDKTTWKSKTAFKDTVIDMARYKGNVDTLKIVDNDIRYKADSFIFNVAGAPEEVKQFSGISRPESWGRWSNAQLGDEVKIEYKHPLPKKFDLVITAKAYGNNASRPIPVRVGNEEQTLVLGNEVTTTTLHFDNPTDADTLVIVPPEPVSTNEGNILGHSPRKLGIGMVEIKVVEREG</sequence>